<protein>
    <recommendedName>
        <fullName>tRNA (guanine-N(1)-)-methyltransferase</fullName>
        <ecNumber>2.1.1.228</ecNumber>
    </recommendedName>
    <alternativeName>
        <fullName>M1G-methyltransferase</fullName>
    </alternativeName>
    <alternativeName>
        <fullName>tRNA [GM37] methyltransferase</fullName>
    </alternativeName>
</protein>
<evidence type="ECO:0000250" key="1"/>
<evidence type="ECO:0000256" key="2">
    <source>
        <dbReference type="SAM" id="MobiDB-lite"/>
    </source>
</evidence>
<evidence type="ECO:0000305" key="3"/>
<reference key="1">
    <citation type="journal article" date="1999" name="Science">
        <title>Genome sequence of the radioresistant bacterium Deinococcus radiodurans R1.</title>
        <authorList>
            <person name="White O."/>
            <person name="Eisen J.A."/>
            <person name="Heidelberg J.F."/>
            <person name="Hickey E.K."/>
            <person name="Peterson J.D."/>
            <person name="Dodson R.J."/>
            <person name="Haft D.H."/>
            <person name="Gwinn M.L."/>
            <person name="Nelson W.C."/>
            <person name="Richardson D.L."/>
            <person name="Moffat K.S."/>
            <person name="Qin H."/>
            <person name="Jiang L."/>
            <person name="Pamphile W."/>
            <person name="Crosby M."/>
            <person name="Shen M."/>
            <person name="Vamathevan J.J."/>
            <person name="Lam P."/>
            <person name="McDonald L.A."/>
            <person name="Utterback T.R."/>
            <person name="Zalewski C."/>
            <person name="Makarova K.S."/>
            <person name="Aravind L."/>
            <person name="Daly M.J."/>
            <person name="Minton K.W."/>
            <person name="Fleischmann R.D."/>
            <person name="Ketchum K.A."/>
            <person name="Nelson K.E."/>
            <person name="Salzberg S.L."/>
            <person name="Smith H.O."/>
            <person name="Venter J.C."/>
            <person name="Fraser C.M."/>
        </authorList>
    </citation>
    <scope>NUCLEOTIDE SEQUENCE [LARGE SCALE GENOMIC DNA]</scope>
    <source>
        <strain>ATCC 13939 / DSM 20539 / JCM 16871 / CCUG 27074 / LMG 4051 / NBRC 15346 / NCIMB 9279 / VKM B-1422 / R1</strain>
    </source>
</reference>
<name>TRMD_DEIRA</name>
<proteinExistence type="inferred from homology"/>
<comment type="function">
    <text evidence="1">Specifically methylates guanosine-37 in various tRNAs.</text>
</comment>
<comment type="catalytic activity">
    <reaction>
        <text>guanosine(37) in tRNA + S-adenosyl-L-methionine = N(1)-methylguanosine(37) in tRNA + S-adenosyl-L-homocysteine + H(+)</text>
        <dbReference type="Rhea" id="RHEA:36899"/>
        <dbReference type="Rhea" id="RHEA-COMP:10145"/>
        <dbReference type="Rhea" id="RHEA-COMP:10147"/>
        <dbReference type="ChEBI" id="CHEBI:15378"/>
        <dbReference type="ChEBI" id="CHEBI:57856"/>
        <dbReference type="ChEBI" id="CHEBI:59789"/>
        <dbReference type="ChEBI" id="CHEBI:73542"/>
        <dbReference type="ChEBI" id="CHEBI:74269"/>
        <dbReference type="EC" id="2.1.1.228"/>
    </reaction>
</comment>
<comment type="subunit">
    <text evidence="1">Homodimer.</text>
</comment>
<comment type="subcellular location">
    <subcellularLocation>
        <location evidence="3">Cytoplasm</location>
    </subcellularLocation>
</comment>
<comment type="similarity">
    <text evidence="3">Belongs to the RNA methyltransferase TrmD family.</text>
</comment>
<sequence>MLTFSFLTLFPELLTPFAQEAIVGKARERGLIDVRLVNLRDYAQNKHLKVDDTPYGGGAGMVIRVDVAARALDAACQAGPRPDEVILFTPAGERFTQQVAEELANKQHLVFLCGRYEGFDARVEGLVTRELSLGDFVMMGGEAAAACVLEAVARLRPGVLGDEASHQQDSFSSGLLDYPEYTRPPEWEGHSVPDVLRGGNHAAVARWRRDQALERTLRRRPDLLPGAGLTPQDSAALLALGVTPEQLSIWDAPPPPAPKVRRKKKPSAEDKAPTDTSSE</sequence>
<dbReference type="EC" id="2.1.1.228"/>
<dbReference type="EMBL" id="AE000513">
    <property type="protein sequence ID" value="AAF11558.1"/>
    <property type="molecule type" value="Genomic_DNA"/>
</dbReference>
<dbReference type="PIR" id="H75326">
    <property type="entry name" value="H75326"/>
</dbReference>
<dbReference type="RefSeq" id="NP_295734.1">
    <property type="nucleotide sequence ID" value="NC_001263.1"/>
</dbReference>
<dbReference type="RefSeq" id="WP_010888644.1">
    <property type="nucleotide sequence ID" value="NC_001263.1"/>
</dbReference>
<dbReference type="SMR" id="Q9RSW0"/>
<dbReference type="FunCoup" id="Q9RSW0">
    <property type="interactions" value="371"/>
</dbReference>
<dbReference type="STRING" id="243230.DR_2011"/>
<dbReference type="PaxDb" id="243230-DR_2011"/>
<dbReference type="EnsemblBacteria" id="AAF11558">
    <property type="protein sequence ID" value="AAF11558"/>
    <property type="gene ID" value="DR_2011"/>
</dbReference>
<dbReference type="GeneID" id="69518248"/>
<dbReference type="KEGG" id="dra:DR_2011"/>
<dbReference type="PATRIC" id="fig|243230.17.peg.2234"/>
<dbReference type="eggNOG" id="COG0336">
    <property type="taxonomic scope" value="Bacteria"/>
</dbReference>
<dbReference type="HOGENOM" id="CLU_047363_0_1_0"/>
<dbReference type="InParanoid" id="Q9RSW0"/>
<dbReference type="OrthoDB" id="9807416at2"/>
<dbReference type="Proteomes" id="UP000002524">
    <property type="component" value="Chromosome 1"/>
</dbReference>
<dbReference type="GO" id="GO:0005829">
    <property type="term" value="C:cytosol"/>
    <property type="evidence" value="ECO:0000318"/>
    <property type="project" value="GO_Central"/>
</dbReference>
<dbReference type="GO" id="GO:0052906">
    <property type="term" value="F:tRNA (guanine(37)-N1)-methyltransferase activity"/>
    <property type="evidence" value="ECO:0000318"/>
    <property type="project" value="GO_Central"/>
</dbReference>
<dbReference type="GO" id="GO:0002939">
    <property type="term" value="P:tRNA N1-guanine methylation"/>
    <property type="evidence" value="ECO:0000318"/>
    <property type="project" value="GO_Central"/>
</dbReference>
<dbReference type="CDD" id="cd18080">
    <property type="entry name" value="TrmD-like"/>
    <property type="match status" value="1"/>
</dbReference>
<dbReference type="FunFam" id="1.10.1270.20:FF:000001">
    <property type="entry name" value="tRNA (guanine-N(1)-)-methyltransferase"/>
    <property type="match status" value="1"/>
</dbReference>
<dbReference type="FunFam" id="3.40.1280.10:FF:000001">
    <property type="entry name" value="tRNA (guanine-N(1)-)-methyltransferase"/>
    <property type="match status" value="1"/>
</dbReference>
<dbReference type="Gene3D" id="3.40.1280.10">
    <property type="match status" value="1"/>
</dbReference>
<dbReference type="Gene3D" id="1.10.1270.20">
    <property type="entry name" value="tRNA(m1g37)methyltransferase, domain 2"/>
    <property type="match status" value="1"/>
</dbReference>
<dbReference type="HAMAP" id="MF_00605">
    <property type="entry name" value="TrmD"/>
    <property type="match status" value="1"/>
</dbReference>
<dbReference type="InterPro" id="IPR029028">
    <property type="entry name" value="Alpha/beta_knot_MTases"/>
</dbReference>
<dbReference type="InterPro" id="IPR023148">
    <property type="entry name" value="tRNA_m1G_MeTrfase_C_sf"/>
</dbReference>
<dbReference type="InterPro" id="IPR002649">
    <property type="entry name" value="tRNA_m1G_MeTrfase_TrmD"/>
</dbReference>
<dbReference type="InterPro" id="IPR029026">
    <property type="entry name" value="tRNA_m1G_MTases_N"/>
</dbReference>
<dbReference type="InterPro" id="IPR016009">
    <property type="entry name" value="tRNA_MeTrfase_TRMD/TRM10"/>
</dbReference>
<dbReference type="NCBIfam" id="NF000648">
    <property type="entry name" value="PRK00026.1"/>
    <property type="match status" value="1"/>
</dbReference>
<dbReference type="NCBIfam" id="TIGR00088">
    <property type="entry name" value="trmD"/>
    <property type="match status" value="1"/>
</dbReference>
<dbReference type="PANTHER" id="PTHR46417">
    <property type="entry name" value="TRNA (GUANINE-N(1)-)-METHYLTRANSFERASE"/>
    <property type="match status" value="1"/>
</dbReference>
<dbReference type="PANTHER" id="PTHR46417:SF1">
    <property type="entry name" value="TRNA (GUANINE-N(1)-)-METHYLTRANSFERASE"/>
    <property type="match status" value="1"/>
</dbReference>
<dbReference type="Pfam" id="PF01746">
    <property type="entry name" value="tRNA_m1G_MT"/>
    <property type="match status" value="1"/>
</dbReference>
<dbReference type="PIRSF" id="PIRSF000386">
    <property type="entry name" value="tRNA_mtase"/>
    <property type="match status" value="1"/>
</dbReference>
<dbReference type="SUPFAM" id="SSF75217">
    <property type="entry name" value="alpha/beta knot"/>
    <property type="match status" value="1"/>
</dbReference>
<keyword id="KW-0963">Cytoplasm</keyword>
<keyword id="KW-0489">Methyltransferase</keyword>
<keyword id="KW-1185">Reference proteome</keyword>
<keyword id="KW-0949">S-adenosyl-L-methionine</keyword>
<keyword id="KW-0808">Transferase</keyword>
<keyword id="KW-0819">tRNA processing</keyword>
<gene>
    <name type="primary">trmD</name>
    <name type="ordered locus">DR_2011</name>
</gene>
<organism>
    <name type="scientific">Deinococcus radiodurans (strain ATCC 13939 / DSM 20539 / JCM 16871 / CCUG 27074 / LMG 4051 / NBRC 15346 / NCIMB 9279 / VKM B-1422 / R1)</name>
    <dbReference type="NCBI Taxonomy" id="243230"/>
    <lineage>
        <taxon>Bacteria</taxon>
        <taxon>Thermotogati</taxon>
        <taxon>Deinococcota</taxon>
        <taxon>Deinococci</taxon>
        <taxon>Deinococcales</taxon>
        <taxon>Deinococcaceae</taxon>
        <taxon>Deinococcus</taxon>
    </lineage>
</organism>
<feature type="chain" id="PRO_0000060368" description="tRNA (guanine-N(1)-)-methyltransferase">
    <location>
        <begin position="1"/>
        <end position="279"/>
    </location>
</feature>
<feature type="region of interest" description="Disordered" evidence="2">
    <location>
        <begin position="245"/>
        <end position="279"/>
    </location>
</feature>
<feature type="binding site" evidence="1">
    <location>
        <position position="114"/>
    </location>
    <ligand>
        <name>S-adenosyl-L-methionine</name>
        <dbReference type="ChEBI" id="CHEBI:59789"/>
    </ligand>
</feature>
<feature type="binding site" evidence="1">
    <location>
        <begin position="133"/>
        <end position="138"/>
    </location>
    <ligand>
        <name>S-adenosyl-L-methionine</name>
        <dbReference type="ChEBI" id="CHEBI:59789"/>
    </ligand>
</feature>
<accession>Q9RSW0</accession>